<keyword id="KW-0002">3D-structure</keyword>
<keyword id="KW-0119">Carbohydrate metabolism</keyword>
<keyword id="KW-0136">Cellulose degradation</keyword>
<keyword id="KW-0903">Direct protein sequencing</keyword>
<keyword id="KW-1015">Disulfide bond</keyword>
<keyword id="KW-0326">Glycosidase</keyword>
<keyword id="KW-0378">Hydrolase</keyword>
<keyword id="KW-0624">Polysaccharide degradation</keyword>
<keyword id="KW-0732">Signal</keyword>
<keyword id="KW-0858">Xylan degradation</keyword>
<gene>
    <name evidence="6" type="primary">txyA</name>
    <name evidence="8" type="synonym">3xynAlc</name>
</gene>
<name>3XYN_ALCSP</name>
<comment type="function">
    <text evidence="3 4">Catalyzes the hydrolysis of beta-1,3-xylan into oligosaccharides, mainly xylotriose and xylobiose with smaller amounts of xylotetraose, xylose, xylopentaose and xylohexaose. Does not hydrolyze xylobiose, p-nitrophenyl-beta-xyloside, beta-1,4-xylan, carboxymethylcellulose, curdlan, glucomannan or beta-1,4-mannan.</text>
</comment>
<comment type="catalytic activity">
    <reaction evidence="3 4">
        <text>Random hydrolysis of (1-&gt;3)-beta-D-glycosidic linkages in (1-&gt;3)-beta-D-xylans.</text>
        <dbReference type="EC" id="3.2.1.32"/>
    </reaction>
</comment>
<comment type="activity regulation">
    <text evidence="4">Completely inhibited by CuCl(2), FeCl(3), HgCl(2) and N-bromosuccinimide. Moderately inhibited by AgCl, AlCl(3), Pb(CH(3)COO)(2) and dithiothreitol. BaCl(2), CaCl(2), KCl, MgCl(2), MnCl(2), NaCl, ZnCl(2), ethylenediaminetetraacetic acid, N-ethylmaleimide, iodoacetic acid and p-chloromercuribenzoic acid have little or no effect on activity.</text>
</comment>
<comment type="biophysicochemical properties">
    <phDependence>
        <text evidence="3 4">Optimum pH is 7.0-7.5. Stable from pH 5.0-11.0. Retains 65% and 70% of activity respectively when incubated at pH 4.0 and 12.0 for 24 hours.</text>
    </phDependence>
    <temperatureDependence>
        <text evidence="3 4">Optimum temperature is 40 degrees Celsius. Stable below 40 degrees Celsius. Loses 70% and 99% of activity respectively when incubated for 10 minutes at 50 and 60 degrees Celsius.</text>
    </temperatureDependence>
</comment>
<comment type="induction">
    <text evidence="4">By beta-1,3-xylan.</text>
</comment>
<comment type="domain">
    <text>The carbohydrate binding module (CBM) binds to insoluble beta-1,3-xylan, but not to insoluble beta-1,4-xylan, beta-1,4-glucan, beta-1,4-mannan, curdlan, chitin, or soluble polysaccharides.</text>
</comment>
<comment type="similarity">
    <text evidence="1">Belongs to the glycosyl hydrolase 26 family.</text>
</comment>
<evidence type="ECO:0000255" key="1">
    <source>
        <dbReference type="PROSITE-ProRule" id="PRU01100"/>
    </source>
</evidence>
<evidence type="ECO:0000256" key="2">
    <source>
        <dbReference type="SAM" id="MobiDB-lite"/>
    </source>
</evidence>
<evidence type="ECO:0000269" key="3">
    <source>
    </source>
</evidence>
<evidence type="ECO:0000269" key="4">
    <source>
    </source>
</evidence>
<evidence type="ECO:0000269" key="5">
    <source>
    </source>
</evidence>
<evidence type="ECO:0000303" key="6">
    <source>
    </source>
</evidence>
<evidence type="ECO:0000305" key="7"/>
<evidence type="ECO:0000312" key="8">
    <source>
        <dbReference type="EMBL" id="BAB88993.1"/>
    </source>
</evidence>
<evidence type="ECO:0007829" key="9">
    <source>
        <dbReference type="PDB" id="2COV"/>
    </source>
</evidence>
<accession>Q8RS40</accession>
<dbReference type="EC" id="3.2.1.32"/>
<dbReference type="EMBL" id="AB039953">
    <property type="protein sequence ID" value="BAB88993.1"/>
    <property type="molecule type" value="Genomic_DNA"/>
</dbReference>
<dbReference type="PDB" id="2COV">
    <property type="method" value="X-ray"/>
    <property type="resolution" value="1.25 A"/>
    <property type="chains" value="D/E/F/G/H/I=375-469"/>
</dbReference>
<dbReference type="PDBsum" id="2COV"/>
<dbReference type="SMR" id="Q8RS40"/>
<dbReference type="CAZy" id="CBM31">
    <property type="family name" value="Carbohydrate-Binding Module Family 31"/>
</dbReference>
<dbReference type="CAZy" id="GH26">
    <property type="family name" value="Glycoside Hydrolase Family 26"/>
</dbReference>
<dbReference type="KEGG" id="ag:BAB88993"/>
<dbReference type="BRENDA" id="3.2.1.32">
    <property type="organism ID" value="236"/>
</dbReference>
<dbReference type="EvolutionaryTrace" id="Q8RS40"/>
<dbReference type="GO" id="GO:0016985">
    <property type="term" value="F:mannan endo-1,4-beta-mannosidase activity"/>
    <property type="evidence" value="ECO:0007669"/>
    <property type="project" value="InterPro"/>
</dbReference>
<dbReference type="GO" id="GO:0030247">
    <property type="term" value="F:polysaccharide binding"/>
    <property type="evidence" value="ECO:0000314"/>
    <property type="project" value="UniProtKB"/>
</dbReference>
<dbReference type="GO" id="GO:0033914">
    <property type="term" value="F:xylan 1,3-beta-xylosidase activity"/>
    <property type="evidence" value="ECO:0000314"/>
    <property type="project" value="UniProtKB"/>
</dbReference>
<dbReference type="GO" id="GO:0033905">
    <property type="term" value="F:xylan endo-1,3-beta-xylosidase activity"/>
    <property type="evidence" value="ECO:0007669"/>
    <property type="project" value="UniProtKB-EC"/>
</dbReference>
<dbReference type="GO" id="GO:0030245">
    <property type="term" value="P:cellulose catabolic process"/>
    <property type="evidence" value="ECO:0007669"/>
    <property type="project" value="UniProtKB-KW"/>
</dbReference>
<dbReference type="GO" id="GO:0006080">
    <property type="term" value="P:substituted mannan metabolic process"/>
    <property type="evidence" value="ECO:0007669"/>
    <property type="project" value="InterPro"/>
</dbReference>
<dbReference type="GO" id="GO:0045493">
    <property type="term" value="P:xylan catabolic process"/>
    <property type="evidence" value="ECO:0000314"/>
    <property type="project" value="UniProtKB"/>
</dbReference>
<dbReference type="FunFam" id="2.60.40.2450:FF:000001">
    <property type="entry name" value="Beta-1,3-xylanase"/>
    <property type="match status" value="1"/>
</dbReference>
<dbReference type="Gene3D" id="2.60.40.2450">
    <property type="entry name" value="Beta-1,3-xylanase, CBM31 domain"/>
    <property type="match status" value="1"/>
</dbReference>
<dbReference type="Gene3D" id="3.20.20.80">
    <property type="entry name" value="Glycosidases"/>
    <property type="match status" value="1"/>
</dbReference>
<dbReference type="InterPro" id="IPR021016">
    <property type="entry name" value="Beta-xylanase"/>
</dbReference>
<dbReference type="InterPro" id="IPR038560">
    <property type="entry name" value="Beta-xylanase_CBM31_sf"/>
</dbReference>
<dbReference type="InterPro" id="IPR022790">
    <property type="entry name" value="GH26_dom"/>
</dbReference>
<dbReference type="InterPro" id="IPR000805">
    <property type="entry name" value="Glyco_hydro_26"/>
</dbReference>
<dbReference type="InterPro" id="IPR017853">
    <property type="entry name" value="Glycoside_hydrolase_SF"/>
</dbReference>
<dbReference type="PANTHER" id="PTHR40079:SF4">
    <property type="entry name" value="GH26 DOMAIN-CONTAINING PROTEIN-RELATED"/>
    <property type="match status" value="1"/>
</dbReference>
<dbReference type="PANTHER" id="PTHR40079">
    <property type="entry name" value="MANNAN ENDO-1,4-BETA-MANNOSIDASE E-RELATED"/>
    <property type="match status" value="1"/>
</dbReference>
<dbReference type="Pfam" id="PF11606">
    <property type="entry name" value="AlcCBM31"/>
    <property type="match status" value="1"/>
</dbReference>
<dbReference type="SUPFAM" id="SSF51445">
    <property type="entry name" value="(Trans)glycosidases"/>
    <property type="match status" value="1"/>
</dbReference>
<dbReference type="PROSITE" id="PS51764">
    <property type="entry name" value="GH26"/>
    <property type="match status" value="1"/>
</dbReference>
<feature type="signal peptide" evidence="4">
    <location>
        <begin position="1"/>
        <end position="22"/>
    </location>
</feature>
<feature type="chain" id="PRO_0000403219" description="Beta-1,3-xylanase" evidence="4">
    <location>
        <begin position="23"/>
        <end position="469"/>
    </location>
</feature>
<feature type="domain" description="GH26" evidence="1">
    <location>
        <begin position="23"/>
        <end position="293"/>
    </location>
</feature>
<feature type="region of interest" description="Disordered" evidence="2">
    <location>
        <begin position="352"/>
        <end position="380"/>
    </location>
</feature>
<feature type="region of interest" description="Carbohydrate binding module (CBM)">
    <location>
        <begin position="377"/>
        <end position="469"/>
    </location>
</feature>
<feature type="compositionally biased region" description="Gly residues" evidence="2">
    <location>
        <begin position="352"/>
        <end position="374"/>
    </location>
</feature>
<feature type="active site" description="Proton donor" evidence="1">
    <location>
        <position position="138"/>
    </location>
</feature>
<feature type="active site" description="Nucleophile" evidence="1">
    <location>
        <position position="234"/>
    </location>
</feature>
<feature type="disulfide bond" evidence="5">
    <location>
        <begin position="382"/>
        <end position="468"/>
    </location>
</feature>
<feature type="disulfide bond" evidence="5">
    <location>
        <begin position="413"/>
        <end position="418"/>
    </location>
</feature>
<feature type="helix" evidence="9">
    <location>
        <begin position="380"/>
        <end position="382"/>
    </location>
</feature>
<feature type="strand" evidence="9">
    <location>
        <begin position="384"/>
        <end position="392"/>
    </location>
</feature>
<feature type="strand" evidence="9">
    <location>
        <begin position="395"/>
        <end position="401"/>
    </location>
</feature>
<feature type="strand" evidence="9">
    <location>
        <begin position="408"/>
        <end position="414"/>
    </location>
</feature>
<feature type="strand" evidence="9">
    <location>
        <begin position="417"/>
        <end position="420"/>
    </location>
</feature>
<feature type="strand" evidence="9">
    <location>
        <begin position="422"/>
        <end position="424"/>
    </location>
</feature>
<feature type="strand" evidence="9">
    <location>
        <begin position="427"/>
        <end position="433"/>
    </location>
</feature>
<feature type="strand" evidence="9">
    <location>
        <begin position="439"/>
        <end position="448"/>
    </location>
</feature>
<feature type="turn" evidence="9">
    <location>
        <begin position="449"/>
        <end position="452"/>
    </location>
</feature>
<feature type="strand" evidence="9">
    <location>
        <begin position="453"/>
        <end position="462"/>
    </location>
</feature>
<organism>
    <name type="scientific">Alcaligenes sp</name>
    <dbReference type="NCBI Taxonomy" id="512"/>
    <lineage>
        <taxon>Bacteria</taxon>
        <taxon>Pseudomonadati</taxon>
        <taxon>Pseudomonadota</taxon>
        <taxon>Betaproteobacteria</taxon>
        <taxon>Burkholderiales</taxon>
        <taxon>Alcaligenaceae</taxon>
        <taxon>Alcaligenes</taxon>
    </lineage>
</organism>
<proteinExistence type="evidence at protein level"/>
<protein>
    <recommendedName>
        <fullName evidence="8">Beta-1,3-xylanase</fullName>
        <ecNumber>3.2.1.32</ecNumber>
    </recommendedName>
</protein>
<sequence>MKKLAKMISIATLGACAFSAHALDGKLVPNEGVLVSVGQDVDSVNDYSSAMSTTPAGVTNYVGIVNLDGLASNADAGAGRNNVVELANLYPTSALIVGVSMNGQIQNVAQGQYNANIDTLIQTLGELDRPVYLRWAYEVDGPWNGHNTEDLKQSFRNVYQRIRELGYGDNISMIWQVASYCPTAPGQLSSWWPGDDVVDWVGLSYFAPQDCNWDRVNEAAQWARSHNKPLFINESSPQRYQLADRTYSSDPAKGTNRQSKTEQQIWSEWFAPYFQFMEDNKDILKGFTYINADWDSQWRWAAPYNEGYWGDSRVQVLPYIKQQWQDTLENPKFINHSSDLFAKLGYVADGGDNGGDNGGDNGGDNGGDNGGDNGGTEPPENCQDDFNFNYVSDQEIEVYHVDKGWSAGWNYVCLNDYCLPGNKSNGAFRKTFNAVLGQDYKLTFKVEDRYGQGQQILDRNITFTTQVCN</sequence>
<reference evidence="7 8" key="1">
    <citation type="journal article" date="2002" name="J. Bacteriol.">
        <title>Novel carbohydrate-binding module of beta-1,3-xylanase from a marine bacterium, Alcaligenes sp. strain XY-234.</title>
        <authorList>
            <person name="Okazaki F."/>
            <person name="Tamaru Y."/>
            <person name="Hashikawa S."/>
            <person name="Li Y.T."/>
            <person name="Araki T."/>
        </authorList>
    </citation>
    <scope>NUCLEOTIDE SEQUENCE [GENOMIC DNA]</scope>
    <scope>FUNCTION</scope>
    <scope>CATALYTIC ACTIVITY</scope>
    <scope>BIOPHYSICOCHEMICAL PROPERTIES</scope>
    <scope>CBM31 DOMAIN</scope>
    <source>
        <strain evidence="8">XY-234</strain>
    </source>
</reference>
<reference evidence="7" key="2">
    <citation type="journal article" date="1998" name="J. Gen. Appl. Microbiol.">
        <title>Purification and characterization of beta-1,3-xylanase from a marine bacterium, Alcaligenes sp. XY-234.</title>
        <authorList>
            <person name="Araki T."/>
            <person name="Inoue N."/>
            <person name="Morishita T."/>
        </authorList>
    </citation>
    <scope>PROTEIN SEQUENCE OF 23-35</scope>
    <scope>FUNCTION</scope>
    <scope>CATALYTIC ACTIVITY</scope>
    <scope>ACTIVITY REGULATION</scope>
    <scope>BIOPHYSICOCHEMICAL PROPERTIES</scope>
    <scope>INDUCTION</scope>
    <source>
        <strain evidence="4">XY-234</strain>
    </source>
</reference>
<reference evidence="7" key="3">
    <citation type="journal article" date="2005" name="FEBS Lett.">
        <title>The first crystal structure of a family 31 carbohydrate-binding module with affinity to beta-1,3-xylan.</title>
        <authorList>
            <person name="Hashimoto H."/>
            <person name="Tamai Y."/>
            <person name="Okazaki F."/>
            <person name="Tamaru Y."/>
            <person name="Shimizu T."/>
            <person name="Araki T."/>
            <person name="Sato M."/>
        </authorList>
    </citation>
    <scope>X-RAY CRYSTALLOGRAPHY (1.25 ANGSTROMS) OF 375-469</scope>
    <scope>DISULFIDE BONDS</scope>
    <source>
        <strain evidence="5">XY-234</strain>
    </source>
</reference>